<comment type="function">
    <text evidence="2">Specifically catalyzes the decarboxylation of meso-diaminopimelate (meso-DAP) to L-lysine.</text>
</comment>
<comment type="catalytic activity">
    <reaction evidence="2">
        <text>meso-2,6-diaminopimelate + H(+) = L-lysine + CO2</text>
        <dbReference type="Rhea" id="RHEA:15101"/>
        <dbReference type="ChEBI" id="CHEBI:15378"/>
        <dbReference type="ChEBI" id="CHEBI:16526"/>
        <dbReference type="ChEBI" id="CHEBI:32551"/>
        <dbReference type="ChEBI" id="CHEBI:57791"/>
        <dbReference type="EC" id="4.1.1.20"/>
    </reaction>
</comment>
<comment type="cofactor">
    <cofactor evidence="2">
        <name>pyridoxal 5'-phosphate</name>
        <dbReference type="ChEBI" id="CHEBI:597326"/>
    </cofactor>
</comment>
<comment type="pathway">
    <text evidence="2">Amino-acid biosynthesis; L-lysine biosynthesis via DAP pathway; L-lysine from DL-2,6-diaminopimelate: step 1/1.</text>
</comment>
<comment type="subunit">
    <text evidence="2">Homodimer.</text>
</comment>
<comment type="similarity">
    <text evidence="2">Belongs to the Orn/Lys/Arg decarboxylase class-II family. LysA subfamily.</text>
</comment>
<gene>
    <name evidence="2" type="primary">lysA</name>
    <name type="ordered locus">BH1544</name>
</gene>
<protein>
    <recommendedName>
        <fullName evidence="2">Diaminopimelate decarboxylase</fullName>
        <shortName evidence="2">DAP decarboxylase</shortName>
        <shortName evidence="2">DAPDC</shortName>
        <ecNumber evidence="2">4.1.1.20</ecNumber>
    </recommendedName>
</protein>
<dbReference type="EC" id="4.1.1.20" evidence="2"/>
<dbReference type="EMBL" id="BA000004">
    <property type="protein sequence ID" value="BAB05263.1"/>
    <property type="molecule type" value="Genomic_DNA"/>
</dbReference>
<dbReference type="PIR" id="H83842">
    <property type="entry name" value="H83842"/>
</dbReference>
<dbReference type="RefSeq" id="WP_010897709.1">
    <property type="nucleotide sequence ID" value="NC_002570.2"/>
</dbReference>
<dbReference type="SMR" id="Q9KCM5"/>
<dbReference type="STRING" id="272558.gene:10727442"/>
<dbReference type="KEGG" id="bha:BH1544"/>
<dbReference type="eggNOG" id="COG0019">
    <property type="taxonomic scope" value="Bacteria"/>
</dbReference>
<dbReference type="HOGENOM" id="CLU_026444_0_1_9"/>
<dbReference type="OrthoDB" id="9802241at2"/>
<dbReference type="UniPathway" id="UPA00034">
    <property type="reaction ID" value="UER00027"/>
</dbReference>
<dbReference type="Proteomes" id="UP000001258">
    <property type="component" value="Chromosome"/>
</dbReference>
<dbReference type="GO" id="GO:0008836">
    <property type="term" value="F:diaminopimelate decarboxylase activity"/>
    <property type="evidence" value="ECO:0007669"/>
    <property type="project" value="UniProtKB-UniRule"/>
</dbReference>
<dbReference type="GO" id="GO:0030170">
    <property type="term" value="F:pyridoxal phosphate binding"/>
    <property type="evidence" value="ECO:0007669"/>
    <property type="project" value="UniProtKB-UniRule"/>
</dbReference>
<dbReference type="GO" id="GO:0009089">
    <property type="term" value="P:lysine biosynthetic process via diaminopimelate"/>
    <property type="evidence" value="ECO:0007669"/>
    <property type="project" value="UniProtKB-UniRule"/>
</dbReference>
<dbReference type="CDD" id="cd06828">
    <property type="entry name" value="PLPDE_III_DapDC"/>
    <property type="match status" value="1"/>
</dbReference>
<dbReference type="FunFam" id="3.20.20.10:FF:000003">
    <property type="entry name" value="Diaminopimelate decarboxylase"/>
    <property type="match status" value="1"/>
</dbReference>
<dbReference type="Gene3D" id="3.20.20.10">
    <property type="entry name" value="Alanine racemase"/>
    <property type="match status" value="1"/>
</dbReference>
<dbReference type="Gene3D" id="2.40.37.10">
    <property type="entry name" value="Lyase, Ornithine Decarboxylase, Chain A, domain 1"/>
    <property type="match status" value="1"/>
</dbReference>
<dbReference type="HAMAP" id="MF_02120">
    <property type="entry name" value="LysA"/>
    <property type="match status" value="1"/>
</dbReference>
<dbReference type="InterPro" id="IPR009006">
    <property type="entry name" value="Ala_racemase/Decarboxylase_C"/>
</dbReference>
<dbReference type="InterPro" id="IPR002986">
    <property type="entry name" value="DAP_deCOOHase_LysA"/>
</dbReference>
<dbReference type="InterPro" id="IPR022643">
    <property type="entry name" value="De-COase2_C"/>
</dbReference>
<dbReference type="InterPro" id="IPR022657">
    <property type="entry name" value="De-COase2_CS"/>
</dbReference>
<dbReference type="InterPro" id="IPR022644">
    <property type="entry name" value="De-COase2_N"/>
</dbReference>
<dbReference type="InterPro" id="IPR000183">
    <property type="entry name" value="Orn/DAP/Arg_de-COase"/>
</dbReference>
<dbReference type="InterPro" id="IPR029066">
    <property type="entry name" value="PLP-binding_barrel"/>
</dbReference>
<dbReference type="NCBIfam" id="TIGR01048">
    <property type="entry name" value="lysA"/>
    <property type="match status" value="1"/>
</dbReference>
<dbReference type="PANTHER" id="PTHR43727">
    <property type="entry name" value="DIAMINOPIMELATE DECARBOXYLASE"/>
    <property type="match status" value="1"/>
</dbReference>
<dbReference type="PANTHER" id="PTHR43727:SF2">
    <property type="entry name" value="GROUP IV DECARBOXYLASE"/>
    <property type="match status" value="1"/>
</dbReference>
<dbReference type="Pfam" id="PF02784">
    <property type="entry name" value="Orn_Arg_deC_N"/>
    <property type="match status" value="1"/>
</dbReference>
<dbReference type="Pfam" id="PF00278">
    <property type="entry name" value="Orn_DAP_Arg_deC"/>
    <property type="match status" value="1"/>
</dbReference>
<dbReference type="PRINTS" id="PR01181">
    <property type="entry name" value="DAPDCRBXLASE"/>
</dbReference>
<dbReference type="PRINTS" id="PR01179">
    <property type="entry name" value="ODADCRBXLASE"/>
</dbReference>
<dbReference type="SUPFAM" id="SSF50621">
    <property type="entry name" value="Alanine racemase C-terminal domain-like"/>
    <property type="match status" value="1"/>
</dbReference>
<dbReference type="SUPFAM" id="SSF51419">
    <property type="entry name" value="PLP-binding barrel"/>
    <property type="match status" value="1"/>
</dbReference>
<dbReference type="PROSITE" id="PS00879">
    <property type="entry name" value="ODR_DC_2_2"/>
    <property type="match status" value="1"/>
</dbReference>
<accession>Q9KCM5</accession>
<feature type="chain" id="PRO_0000149913" description="Diaminopimelate decarboxylase">
    <location>
        <begin position="1"/>
        <end position="439"/>
    </location>
</feature>
<feature type="active site" description="Proton donor" evidence="1">
    <location>
        <position position="361"/>
    </location>
</feature>
<feature type="binding site" evidence="2">
    <location>
        <position position="248"/>
    </location>
    <ligand>
        <name>pyridoxal 5'-phosphate</name>
        <dbReference type="ChEBI" id="CHEBI:597326"/>
    </ligand>
</feature>
<feature type="binding site" evidence="2">
    <location>
        <begin position="290"/>
        <end position="293"/>
    </location>
    <ligand>
        <name>pyridoxal 5'-phosphate</name>
        <dbReference type="ChEBI" id="CHEBI:597326"/>
    </ligand>
</feature>
<feature type="binding site" evidence="2">
    <location>
        <position position="293"/>
    </location>
    <ligand>
        <name>substrate</name>
    </ligand>
</feature>
<feature type="binding site" evidence="2">
    <location>
        <position position="330"/>
    </location>
    <ligand>
        <name>substrate</name>
    </ligand>
</feature>
<feature type="binding site" evidence="2">
    <location>
        <position position="334"/>
    </location>
    <ligand>
        <name>substrate</name>
    </ligand>
</feature>
<feature type="binding site" evidence="2">
    <location>
        <position position="362"/>
    </location>
    <ligand>
        <name>substrate</name>
    </ligand>
</feature>
<feature type="binding site" evidence="2">
    <location>
        <position position="390"/>
    </location>
    <ligand>
        <name>pyridoxal 5'-phosphate</name>
        <dbReference type="ChEBI" id="CHEBI:597326"/>
    </ligand>
</feature>
<feature type="binding site" evidence="2">
    <location>
        <position position="390"/>
    </location>
    <ligand>
        <name>substrate</name>
    </ligand>
</feature>
<feature type="modified residue" description="N6-(pyridoxal phosphate)lysine" evidence="2">
    <location>
        <position position="66"/>
    </location>
</feature>
<proteinExistence type="inferred from homology"/>
<sequence length="439" mass="48444">MFFHGTSRVNGKGHLEIGGVDTVELANLYGTPLFVYDVALIRERAKDFKQAFADEGVQAQVAYASKAFSCIAMFQLAEELGLSLDVVSGGELYTAQQAGVSMERIHFHGNNKSRAEIEMAVEAGIGCFVVDNFYELDLLADICEQKRATANILLRITPGVEAHTHDYISTGQEDSKFGFDLVSGQATLAVKKALAVDSIHLLGVHSHIGSQIFETTGFVMAVEKIFEHLVTWREDHGFEPSVLNLGGGFGIRYIEGDTPRPVGDYVKEMIRAVKQQIAEHEMSMPEIWIEPGRSLVGDAGTTLYTIGSRKEIPNVRHYLSVDGGMSDNLRPALYQAEYEGALANRVNEQPVGMFSVAGKCCESGDMLIWDLPLPEANHEDILAVFCTGAYGYSMANNYNRIPRPPVVFVEDGDAQLVIQRERYEDLVRLDMPLVKKVKV</sequence>
<name>DCDA_HALH5</name>
<organism>
    <name type="scientific">Halalkalibacterium halodurans (strain ATCC BAA-125 / DSM 18197 / FERM 7344 / JCM 9153 / C-125)</name>
    <name type="common">Bacillus halodurans</name>
    <dbReference type="NCBI Taxonomy" id="272558"/>
    <lineage>
        <taxon>Bacteria</taxon>
        <taxon>Bacillati</taxon>
        <taxon>Bacillota</taxon>
        <taxon>Bacilli</taxon>
        <taxon>Bacillales</taxon>
        <taxon>Bacillaceae</taxon>
        <taxon>Halalkalibacterium (ex Joshi et al. 2022)</taxon>
    </lineage>
</organism>
<keyword id="KW-0028">Amino-acid biosynthesis</keyword>
<keyword id="KW-0210">Decarboxylase</keyword>
<keyword id="KW-0456">Lyase</keyword>
<keyword id="KW-0457">Lysine biosynthesis</keyword>
<keyword id="KW-0663">Pyridoxal phosphate</keyword>
<keyword id="KW-1185">Reference proteome</keyword>
<evidence type="ECO:0000255" key="1"/>
<evidence type="ECO:0000255" key="2">
    <source>
        <dbReference type="HAMAP-Rule" id="MF_02120"/>
    </source>
</evidence>
<reference key="1">
    <citation type="journal article" date="2000" name="Nucleic Acids Res.">
        <title>Complete genome sequence of the alkaliphilic bacterium Bacillus halodurans and genomic sequence comparison with Bacillus subtilis.</title>
        <authorList>
            <person name="Takami H."/>
            <person name="Nakasone K."/>
            <person name="Takaki Y."/>
            <person name="Maeno G."/>
            <person name="Sasaki R."/>
            <person name="Masui N."/>
            <person name="Fuji F."/>
            <person name="Hirama C."/>
            <person name="Nakamura Y."/>
            <person name="Ogasawara N."/>
            <person name="Kuhara S."/>
            <person name="Horikoshi K."/>
        </authorList>
    </citation>
    <scope>NUCLEOTIDE SEQUENCE [LARGE SCALE GENOMIC DNA]</scope>
    <source>
        <strain>ATCC BAA-125 / DSM 18197 / FERM 7344 / JCM 9153 / C-125</strain>
    </source>
</reference>